<reference key="1">
    <citation type="submission" date="2008-05" db="EMBL/GenBank/DDBJ databases">
        <title>Complete sequence of Shigella boydii serotype 18 strain BS512.</title>
        <authorList>
            <person name="Rasko D.A."/>
            <person name="Rosovitz M."/>
            <person name="Maurelli A.T."/>
            <person name="Myers G."/>
            <person name="Seshadri R."/>
            <person name="Cer R."/>
            <person name="Jiang L."/>
            <person name="Ravel J."/>
            <person name="Sebastian Y."/>
        </authorList>
    </citation>
    <scope>NUCLEOTIDE SEQUENCE [LARGE SCALE GENOMIC DNA]</scope>
    <source>
        <strain>CDC 3083-94 / BS512</strain>
    </source>
</reference>
<gene>
    <name evidence="1" type="primary">kdsA</name>
    <name type="ordered locus">SbBS512_E1379</name>
</gene>
<accession>B2TZW3</accession>
<comment type="catalytic activity">
    <reaction evidence="1">
        <text>D-arabinose 5-phosphate + phosphoenolpyruvate + H2O = 3-deoxy-alpha-D-manno-2-octulosonate-8-phosphate + phosphate</text>
        <dbReference type="Rhea" id="RHEA:14053"/>
        <dbReference type="ChEBI" id="CHEBI:15377"/>
        <dbReference type="ChEBI" id="CHEBI:43474"/>
        <dbReference type="ChEBI" id="CHEBI:57693"/>
        <dbReference type="ChEBI" id="CHEBI:58702"/>
        <dbReference type="ChEBI" id="CHEBI:85985"/>
        <dbReference type="EC" id="2.5.1.55"/>
    </reaction>
</comment>
<comment type="pathway">
    <text evidence="1">Carbohydrate biosynthesis; 3-deoxy-D-manno-octulosonate biosynthesis; 3-deoxy-D-manno-octulosonate from D-ribulose 5-phosphate: step 2/3.</text>
</comment>
<comment type="pathway">
    <text evidence="1">Bacterial outer membrane biogenesis; lipopolysaccharide biosynthesis.</text>
</comment>
<comment type="subcellular location">
    <subcellularLocation>
        <location evidence="1">Cytoplasm</location>
    </subcellularLocation>
</comment>
<comment type="similarity">
    <text evidence="1">Belongs to the KdsA family.</text>
</comment>
<name>KDSA_SHIB3</name>
<proteinExistence type="inferred from homology"/>
<sequence length="284" mass="30833">MKQKVVSIGDINVANDLPFVLFGGMNVLESRDLAMRICEHYVTVTQKLGIPYVFKASFDKANRSSIHSYRGPGLEEGMKIFQELKQTFGVKIITDVHEPSQAQPVADVVDVIQLPAFLARQTDLVEAMAKTGAVINVKKPQFVSPGQMGNIVDKFKEGGNEKVILCDRGANFGYDNLVVDMLGFSIMKKVSGNSPVIFDVTHALQCRDPFGAASGGRRAQVAELARAGMAVGLAGLFIEAHPDPEHAKCDGPSALPLAKLEPFLKQMKAIDDLVKGFEELDTSK</sequence>
<protein>
    <recommendedName>
        <fullName evidence="1">2-dehydro-3-deoxyphosphooctonate aldolase</fullName>
        <ecNumber evidence="1">2.5.1.55</ecNumber>
    </recommendedName>
    <alternativeName>
        <fullName evidence="1">3-deoxy-D-manno-octulosonic acid 8-phosphate synthase</fullName>
    </alternativeName>
    <alternativeName>
        <fullName evidence="1">KDO-8-phosphate synthase</fullName>
        <shortName evidence="1">KDO 8-P synthase</shortName>
        <shortName evidence="1">KDOPS</shortName>
    </alternativeName>
    <alternativeName>
        <fullName evidence="1">Phospho-2-dehydro-3-deoxyoctonate aldolase</fullName>
    </alternativeName>
</protein>
<evidence type="ECO:0000255" key="1">
    <source>
        <dbReference type="HAMAP-Rule" id="MF_00056"/>
    </source>
</evidence>
<keyword id="KW-0963">Cytoplasm</keyword>
<keyword id="KW-0448">Lipopolysaccharide biosynthesis</keyword>
<keyword id="KW-1185">Reference proteome</keyword>
<keyword id="KW-0808">Transferase</keyword>
<dbReference type="EC" id="2.5.1.55" evidence="1"/>
<dbReference type="EMBL" id="CP001063">
    <property type="protein sequence ID" value="ACD08014.1"/>
    <property type="molecule type" value="Genomic_DNA"/>
</dbReference>
<dbReference type="RefSeq" id="WP_000811065.1">
    <property type="nucleotide sequence ID" value="NC_010658.1"/>
</dbReference>
<dbReference type="SMR" id="B2TZW3"/>
<dbReference type="STRING" id="344609.SbBS512_E1379"/>
<dbReference type="GeneID" id="75203328"/>
<dbReference type="KEGG" id="sbc:SbBS512_E1379"/>
<dbReference type="HOGENOM" id="CLU_036666_0_0_6"/>
<dbReference type="UniPathway" id="UPA00030"/>
<dbReference type="UniPathway" id="UPA00357">
    <property type="reaction ID" value="UER00474"/>
</dbReference>
<dbReference type="Proteomes" id="UP000001030">
    <property type="component" value="Chromosome"/>
</dbReference>
<dbReference type="GO" id="GO:0005737">
    <property type="term" value="C:cytoplasm"/>
    <property type="evidence" value="ECO:0007669"/>
    <property type="project" value="UniProtKB-SubCell"/>
</dbReference>
<dbReference type="GO" id="GO:0008676">
    <property type="term" value="F:3-deoxy-8-phosphooctulonate synthase activity"/>
    <property type="evidence" value="ECO:0007669"/>
    <property type="project" value="UniProtKB-UniRule"/>
</dbReference>
<dbReference type="GO" id="GO:0019294">
    <property type="term" value="P:keto-3-deoxy-D-manno-octulosonic acid biosynthetic process"/>
    <property type="evidence" value="ECO:0007669"/>
    <property type="project" value="UniProtKB-UniRule"/>
</dbReference>
<dbReference type="FunFam" id="3.20.20.70:FF:000058">
    <property type="entry name" value="2-dehydro-3-deoxyphosphooctonate aldolase"/>
    <property type="match status" value="1"/>
</dbReference>
<dbReference type="Gene3D" id="3.20.20.70">
    <property type="entry name" value="Aldolase class I"/>
    <property type="match status" value="1"/>
</dbReference>
<dbReference type="HAMAP" id="MF_00056">
    <property type="entry name" value="KDO8P_synth"/>
    <property type="match status" value="1"/>
</dbReference>
<dbReference type="InterPro" id="IPR013785">
    <property type="entry name" value="Aldolase_TIM"/>
</dbReference>
<dbReference type="InterPro" id="IPR006218">
    <property type="entry name" value="DAHP1/KDSA"/>
</dbReference>
<dbReference type="InterPro" id="IPR006269">
    <property type="entry name" value="KDO8P_synthase"/>
</dbReference>
<dbReference type="NCBIfam" id="TIGR01362">
    <property type="entry name" value="KDO8P_synth"/>
    <property type="match status" value="1"/>
</dbReference>
<dbReference type="NCBIfam" id="NF003543">
    <property type="entry name" value="PRK05198.1"/>
    <property type="match status" value="1"/>
</dbReference>
<dbReference type="NCBIfam" id="NF009109">
    <property type="entry name" value="PRK12457.1"/>
    <property type="match status" value="1"/>
</dbReference>
<dbReference type="PANTHER" id="PTHR21057">
    <property type="entry name" value="PHOSPHO-2-DEHYDRO-3-DEOXYHEPTONATE ALDOLASE"/>
    <property type="match status" value="1"/>
</dbReference>
<dbReference type="Pfam" id="PF00793">
    <property type="entry name" value="DAHP_synth_1"/>
    <property type="match status" value="1"/>
</dbReference>
<dbReference type="SUPFAM" id="SSF51569">
    <property type="entry name" value="Aldolase"/>
    <property type="match status" value="1"/>
</dbReference>
<organism>
    <name type="scientific">Shigella boydii serotype 18 (strain CDC 3083-94 / BS512)</name>
    <dbReference type="NCBI Taxonomy" id="344609"/>
    <lineage>
        <taxon>Bacteria</taxon>
        <taxon>Pseudomonadati</taxon>
        <taxon>Pseudomonadota</taxon>
        <taxon>Gammaproteobacteria</taxon>
        <taxon>Enterobacterales</taxon>
        <taxon>Enterobacteriaceae</taxon>
        <taxon>Shigella</taxon>
    </lineage>
</organism>
<feature type="chain" id="PRO_1000091838" description="2-dehydro-3-deoxyphosphooctonate aldolase">
    <location>
        <begin position="1"/>
        <end position="284"/>
    </location>
</feature>